<comment type="function">
    <text evidence="1">Located at the top of the head of the 30S subunit, it contacts several helices of the 16S rRNA. In the 70S ribosome it contacts the 23S rRNA (bridge B1a) and protein L5 of the 50S subunit (bridge B1b), connecting the 2 subunits; these bridges are implicated in subunit movement. Contacts the tRNAs in the A and P-sites.</text>
</comment>
<comment type="subunit">
    <text evidence="1">Part of the 30S ribosomal subunit. Forms a loose heterodimer with protein S19. Forms two bridges to the 50S subunit in the 70S ribosome.</text>
</comment>
<comment type="similarity">
    <text evidence="1">Belongs to the universal ribosomal protein uS13 family.</text>
</comment>
<protein>
    <recommendedName>
        <fullName evidence="1">Small ribosomal subunit protein uS13</fullName>
    </recommendedName>
    <alternativeName>
        <fullName evidence="3">30S ribosomal protein S13</fullName>
    </alternativeName>
</protein>
<dbReference type="EMBL" id="BX548174">
    <property type="protein sequence ID" value="CAE19996.1"/>
    <property type="molecule type" value="Genomic_DNA"/>
</dbReference>
<dbReference type="RefSeq" id="WP_011133165.1">
    <property type="nucleotide sequence ID" value="NC_005072.1"/>
</dbReference>
<dbReference type="SMR" id="Q7UZW4"/>
<dbReference type="STRING" id="59919.PMM1537"/>
<dbReference type="KEGG" id="pmm:PMM1537"/>
<dbReference type="eggNOG" id="COG0099">
    <property type="taxonomic scope" value="Bacteria"/>
</dbReference>
<dbReference type="HOGENOM" id="CLU_103849_1_2_3"/>
<dbReference type="OrthoDB" id="9803610at2"/>
<dbReference type="Proteomes" id="UP000001026">
    <property type="component" value="Chromosome"/>
</dbReference>
<dbReference type="GO" id="GO:0005829">
    <property type="term" value="C:cytosol"/>
    <property type="evidence" value="ECO:0007669"/>
    <property type="project" value="TreeGrafter"/>
</dbReference>
<dbReference type="GO" id="GO:0015935">
    <property type="term" value="C:small ribosomal subunit"/>
    <property type="evidence" value="ECO:0007669"/>
    <property type="project" value="TreeGrafter"/>
</dbReference>
<dbReference type="GO" id="GO:0019843">
    <property type="term" value="F:rRNA binding"/>
    <property type="evidence" value="ECO:0007669"/>
    <property type="project" value="UniProtKB-UniRule"/>
</dbReference>
<dbReference type="GO" id="GO:0003735">
    <property type="term" value="F:structural constituent of ribosome"/>
    <property type="evidence" value="ECO:0007669"/>
    <property type="project" value="InterPro"/>
</dbReference>
<dbReference type="GO" id="GO:0000049">
    <property type="term" value="F:tRNA binding"/>
    <property type="evidence" value="ECO:0007669"/>
    <property type="project" value="UniProtKB-UniRule"/>
</dbReference>
<dbReference type="GO" id="GO:0006412">
    <property type="term" value="P:translation"/>
    <property type="evidence" value="ECO:0007669"/>
    <property type="project" value="UniProtKB-UniRule"/>
</dbReference>
<dbReference type="FunFam" id="1.10.8.50:FF:000001">
    <property type="entry name" value="30S ribosomal protein S13"/>
    <property type="match status" value="1"/>
</dbReference>
<dbReference type="Gene3D" id="1.10.8.50">
    <property type="match status" value="1"/>
</dbReference>
<dbReference type="Gene3D" id="4.10.910.10">
    <property type="entry name" value="30s ribosomal protein s13, domain 2"/>
    <property type="match status" value="1"/>
</dbReference>
<dbReference type="HAMAP" id="MF_01315">
    <property type="entry name" value="Ribosomal_uS13"/>
    <property type="match status" value="1"/>
</dbReference>
<dbReference type="InterPro" id="IPR027437">
    <property type="entry name" value="Rbsml_uS13_C"/>
</dbReference>
<dbReference type="InterPro" id="IPR001892">
    <property type="entry name" value="Ribosomal_uS13"/>
</dbReference>
<dbReference type="InterPro" id="IPR010979">
    <property type="entry name" value="Ribosomal_uS13-like_H2TH"/>
</dbReference>
<dbReference type="InterPro" id="IPR019980">
    <property type="entry name" value="Ribosomal_uS13_bac-type"/>
</dbReference>
<dbReference type="InterPro" id="IPR018269">
    <property type="entry name" value="Ribosomal_uS13_CS"/>
</dbReference>
<dbReference type="NCBIfam" id="TIGR03631">
    <property type="entry name" value="uS13_bact"/>
    <property type="match status" value="1"/>
</dbReference>
<dbReference type="PANTHER" id="PTHR10871">
    <property type="entry name" value="30S RIBOSOMAL PROTEIN S13/40S RIBOSOMAL PROTEIN S18"/>
    <property type="match status" value="1"/>
</dbReference>
<dbReference type="PANTHER" id="PTHR10871:SF1">
    <property type="entry name" value="SMALL RIBOSOMAL SUBUNIT PROTEIN US13M"/>
    <property type="match status" value="1"/>
</dbReference>
<dbReference type="Pfam" id="PF00416">
    <property type="entry name" value="Ribosomal_S13"/>
    <property type="match status" value="1"/>
</dbReference>
<dbReference type="PIRSF" id="PIRSF002134">
    <property type="entry name" value="Ribosomal_S13"/>
    <property type="match status" value="1"/>
</dbReference>
<dbReference type="SUPFAM" id="SSF46946">
    <property type="entry name" value="S13-like H2TH domain"/>
    <property type="match status" value="1"/>
</dbReference>
<dbReference type="PROSITE" id="PS00646">
    <property type="entry name" value="RIBOSOMAL_S13_1"/>
    <property type="match status" value="1"/>
</dbReference>
<dbReference type="PROSITE" id="PS50159">
    <property type="entry name" value="RIBOSOMAL_S13_2"/>
    <property type="match status" value="1"/>
</dbReference>
<organism>
    <name type="scientific">Prochlorococcus marinus subsp. pastoris (strain CCMP1986 / NIES-2087 / MED4)</name>
    <dbReference type="NCBI Taxonomy" id="59919"/>
    <lineage>
        <taxon>Bacteria</taxon>
        <taxon>Bacillati</taxon>
        <taxon>Cyanobacteriota</taxon>
        <taxon>Cyanophyceae</taxon>
        <taxon>Synechococcales</taxon>
        <taxon>Prochlorococcaceae</taxon>
        <taxon>Prochlorococcus</taxon>
    </lineage>
</organism>
<keyword id="KW-0687">Ribonucleoprotein</keyword>
<keyword id="KW-0689">Ribosomal protein</keyword>
<keyword id="KW-0694">RNA-binding</keyword>
<keyword id="KW-0699">rRNA-binding</keyword>
<keyword id="KW-0820">tRNA-binding</keyword>
<reference key="1">
    <citation type="journal article" date="2003" name="Nature">
        <title>Genome divergence in two Prochlorococcus ecotypes reflects oceanic niche differentiation.</title>
        <authorList>
            <person name="Rocap G."/>
            <person name="Larimer F.W."/>
            <person name="Lamerdin J.E."/>
            <person name="Malfatti S."/>
            <person name="Chain P."/>
            <person name="Ahlgren N.A."/>
            <person name="Arellano A."/>
            <person name="Coleman M."/>
            <person name="Hauser L."/>
            <person name="Hess W.R."/>
            <person name="Johnson Z.I."/>
            <person name="Land M.L."/>
            <person name="Lindell D."/>
            <person name="Post A.F."/>
            <person name="Regala W."/>
            <person name="Shah M."/>
            <person name="Shaw S.L."/>
            <person name="Steglich C."/>
            <person name="Sullivan M.B."/>
            <person name="Ting C.S."/>
            <person name="Tolonen A."/>
            <person name="Webb E.A."/>
            <person name="Zinser E.R."/>
            <person name="Chisholm S.W."/>
        </authorList>
    </citation>
    <scope>NUCLEOTIDE SEQUENCE [LARGE SCALE GENOMIC DNA]</scope>
    <source>
        <strain>CCMP1986 / NIES-2087 / MED4</strain>
    </source>
</reference>
<feature type="chain" id="PRO_0000230548" description="Small ribosomal subunit protein uS13">
    <location>
        <begin position="1"/>
        <end position="121"/>
    </location>
</feature>
<feature type="region of interest" description="Disordered" evidence="2">
    <location>
        <begin position="89"/>
        <end position="121"/>
    </location>
</feature>
<feature type="compositionally biased region" description="Basic residues" evidence="2">
    <location>
        <begin position="100"/>
        <end position="121"/>
    </location>
</feature>
<name>RS13_PROMP</name>
<sequence length="121" mass="13705">MARIAGIDIPREKRVEIALTYIYGVGLTRSKLILSNTGVNPDIRVKDLSDSDVQKLRGATEDFTVEGDLRRKEGMAMKRLQDIGCVRGRRHRMSLPVRGQRTRTNARTRRGSRKTVAGRKK</sequence>
<proteinExistence type="inferred from homology"/>
<gene>
    <name evidence="1" type="primary">rpsM</name>
    <name evidence="1" type="synonym">rps13</name>
    <name type="ordered locus">PMM1537</name>
</gene>
<accession>Q7UZW4</accession>
<evidence type="ECO:0000255" key="1">
    <source>
        <dbReference type="HAMAP-Rule" id="MF_01315"/>
    </source>
</evidence>
<evidence type="ECO:0000256" key="2">
    <source>
        <dbReference type="SAM" id="MobiDB-lite"/>
    </source>
</evidence>
<evidence type="ECO:0000305" key="3"/>